<name>COBT_ECOSE</name>
<evidence type="ECO:0000255" key="1">
    <source>
        <dbReference type="HAMAP-Rule" id="MF_00230"/>
    </source>
</evidence>
<organism>
    <name type="scientific">Escherichia coli (strain SE11)</name>
    <dbReference type="NCBI Taxonomy" id="409438"/>
    <lineage>
        <taxon>Bacteria</taxon>
        <taxon>Pseudomonadati</taxon>
        <taxon>Pseudomonadota</taxon>
        <taxon>Gammaproteobacteria</taxon>
        <taxon>Enterobacterales</taxon>
        <taxon>Enterobacteriaceae</taxon>
        <taxon>Escherichia</taxon>
    </lineage>
</organism>
<protein>
    <recommendedName>
        <fullName evidence="1">Nicotinate-nucleotide--dimethylbenzimidazole phosphoribosyltransferase</fullName>
        <shortName evidence="1">NN:DBI PRT</shortName>
        <ecNumber evidence="1">2.4.2.21</ecNumber>
    </recommendedName>
    <alternativeName>
        <fullName evidence="1">N(1)-alpha-phosphoribosyltransferase</fullName>
    </alternativeName>
</protein>
<reference key="1">
    <citation type="journal article" date="2008" name="DNA Res.">
        <title>Complete genome sequence and comparative analysis of the wild-type commensal Escherichia coli strain SE11 isolated from a healthy adult.</title>
        <authorList>
            <person name="Oshima K."/>
            <person name="Toh H."/>
            <person name="Ogura Y."/>
            <person name="Sasamoto H."/>
            <person name="Morita H."/>
            <person name="Park S.-H."/>
            <person name="Ooka T."/>
            <person name="Iyoda S."/>
            <person name="Taylor T.D."/>
            <person name="Hayashi T."/>
            <person name="Itoh K."/>
            <person name="Hattori M."/>
        </authorList>
    </citation>
    <scope>NUCLEOTIDE SEQUENCE [LARGE SCALE GENOMIC DNA]</scope>
    <source>
        <strain>SE11</strain>
    </source>
</reference>
<comment type="function">
    <text evidence="1">Catalyzes the synthesis of alpha-ribazole-5'-phosphate from nicotinate mononucleotide (NAMN) and 5,6-dimethylbenzimidazole (DMB).</text>
</comment>
<comment type="catalytic activity">
    <reaction evidence="1">
        <text>5,6-dimethylbenzimidazole + nicotinate beta-D-ribonucleotide = alpha-ribazole 5'-phosphate + nicotinate + H(+)</text>
        <dbReference type="Rhea" id="RHEA:11196"/>
        <dbReference type="ChEBI" id="CHEBI:15378"/>
        <dbReference type="ChEBI" id="CHEBI:15890"/>
        <dbReference type="ChEBI" id="CHEBI:32544"/>
        <dbReference type="ChEBI" id="CHEBI:57502"/>
        <dbReference type="ChEBI" id="CHEBI:57918"/>
        <dbReference type="EC" id="2.4.2.21"/>
    </reaction>
</comment>
<comment type="pathway">
    <text evidence="1">Nucleoside biosynthesis; alpha-ribazole biosynthesis; alpha-ribazole from 5,6-dimethylbenzimidazole: step 1/2.</text>
</comment>
<comment type="subunit">
    <text evidence="1">Homodimer.</text>
</comment>
<comment type="similarity">
    <text evidence="1">Belongs to the CobT family.</text>
</comment>
<gene>
    <name evidence="1" type="primary">cobT</name>
    <name type="ordered locus">ECSE_2275</name>
</gene>
<feature type="chain" id="PRO_1000100464" description="Nicotinate-nucleotide--dimethylbenzimidazole phosphoribosyltransferase">
    <location>
        <begin position="1"/>
        <end position="359"/>
    </location>
</feature>
<feature type="active site" description="Proton acceptor" evidence="1">
    <location>
        <position position="318"/>
    </location>
</feature>
<dbReference type="EC" id="2.4.2.21" evidence="1"/>
<dbReference type="EMBL" id="AP009240">
    <property type="protein sequence ID" value="BAG77799.1"/>
    <property type="molecule type" value="Genomic_DNA"/>
</dbReference>
<dbReference type="RefSeq" id="WP_001193777.1">
    <property type="nucleotide sequence ID" value="NC_011415.1"/>
</dbReference>
<dbReference type="SMR" id="B6I828"/>
<dbReference type="KEGG" id="ecy:ECSE_2275"/>
<dbReference type="HOGENOM" id="CLU_002982_0_0_6"/>
<dbReference type="UniPathway" id="UPA00061">
    <property type="reaction ID" value="UER00516"/>
</dbReference>
<dbReference type="Proteomes" id="UP000008199">
    <property type="component" value="Chromosome"/>
</dbReference>
<dbReference type="GO" id="GO:0008939">
    <property type="term" value="F:nicotinate-nucleotide-dimethylbenzimidazole phosphoribosyltransferase activity"/>
    <property type="evidence" value="ECO:0007669"/>
    <property type="project" value="UniProtKB-UniRule"/>
</dbReference>
<dbReference type="GO" id="GO:0009236">
    <property type="term" value="P:cobalamin biosynthetic process"/>
    <property type="evidence" value="ECO:0007669"/>
    <property type="project" value="UniProtKB-KW"/>
</dbReference>
<dbReference type="CDD" id="cd02439">
    <property type="entry name" value="DMB-PRT_CobT"/>
    <property type="match status" value="1"/>
</dbReference>
<dbReference type="FunFam" id="1.10.1610.10:FF:000001">
    <property type="entry name" value="Nicotinate-nucleotide--dimethylbenzimidazole phosphoribosyltransferase"/>
    <property type="match status" value="1"/>
</dbReference>
<dbReference type="FunFam" id="3.40.50.10210:FF:000001">
    <property type="entry name" value="Nicotinate-nucleotide--dimethylbenzimidazole phosphoribosyltransferase"/>
    <property type="match status" value="1"/>
</dbReference>
<dbReference type="Gene3D" id="1.10.1610.10">
    <property type="match status" value="1"/>
</dbReference>
<dbReference type="Gene3D" id="3.40.50.10210">
    <property type="match status" value="1"/>
</dbReference>
<dbReference type="HAMAP" id="MF_00230">
    <property type="entry name" value="CobT"/>
    <property type="match status" value="1"/>
</dbReference>
<dbReference type="InterPro" id="IPR003200">
    <property type="entry name" value="Nict_dMeBzImd_PRibTrfase"/>
</dbReference>
<dbReference type="InterPro" id="IPR017846">
    <property type="entry name" value="Nict_dMeBzImd_PRibTrfase_bact"/>
</dbReference>
<dbReference type="InterPro" id="IPR023195">
    <property type="entry name" value="Nict_dMeBzImd_PRibTrfase_N"/>
</dbReference>
<dbReference type="InterPro" id="IPR036087">
    <property type="entry name" value="Nict_dMeBzImd_PRibTrfase_sf"/>
</dbReference>
<dbReference type="NCBIfam" id="TIGR03160">
    <property type="entry name" value="cobT_DBIPRT"/>
    <property type="match status" value="1"/>
</dbReference>
<dbReference type="NCBIfam" id="NF000996">
    <property type="entry name" value="PRK00105.1"/>
    <property type="match status" value="1"/>
</dbReference>
<dbReference type="PANTHER" id="PTHR43463">
    <property type="entry name" value="NICOTINATE-NUCLEOTIDE--DIMETHYLBENZIMIDAZOLE PHOSPHORIBOSYLTRANSFERASE"/>
    <property type="match status" value="1"/>
</dbReference>
<dbReference type="PANTHER" id="PTHR43463:SF1">
    <property type="entry name" value="NICOTINATE-NUCLEOTIDE--DIMETHYLBENZIMIDAZOLE PHOSPHORIBOSYLTRANSFERASE"/>
    <property type="match status" value="1"/>
</dbReference>
<dbReference type="Pfam" id="PF02277">
    <property type="entry name" value="DBI_PRT"/>
    <property type="match status" value="1"/>
</dbReference>
<dbReference type="SUPFAM" id="SSF52733">
    <property type="entry name" value="Nicotinate mononucleotide:5,6-dimethylbenzimidazole phosphoribosyltransferase (CobT)"/>
    <property type="match status" value="1"/>
</dbReference>
<keyword id="KW-0169">Cobalamin biosynthesis</keyword>
<keyword id="KW-0328">Glycosyltransferase</keyword>
<keyword id="KW-0808">Transferase</keyword>
<accession>B6I828</accession>
<proteinExistence type="inferred from homology"/>
<sequence>MQTLADLLNTIPAIDPAAMSRAQRHIDGLLKPVGSLGRLEALAIQLAGMPGLNGIPHVGKKAVLVMCADHGVWEEGVAISPKEVTAIQAENMTRGTTGVCVLAAQAGANVHVIDVGIDTAEPIPGLINMRVARGSGNIASAPAMSRRQAVKLLLDVICYTRELAKNGVTLFGVGELGMANTTPAAAIVSTITGRAPEEVVGIGANLPTDKLANKIDVVRRAITLNQPNPQDGVDVLAKVGGFDLVGMAGVMLGAASCGLPVLLDGFLSYAAALAACQMSPAIKPYLIPSHLSAEKGARIALSHLGLEPYLNMEMRLGEGSGAALAMPIIEAACAIYNNMGELAASNIVLPGNTTSDLNS</sequence>